<accession>B0KD87</accession>
<feature type="chain" id="PRO_1000139749" description="UPF0309 protein Teth39_1980">
    <location>
        <begin position="1"/>
        <end position="247"/>
    </location>
</feature>
<feature type="domain" description="SIS" evidence="1">
    <location>
        <begin position="31"/>
        <end position="213"/>
    </location>
</feature>
<comment type="similarity">
    <text evidence="1">Belongs to the UPF0309 family.</text>
</comment>
<reference key="1">
    <citation type="submission" date="2008-01" db="EMBL/GenBank/DDBJ databases">
        <title>Complete sequence of Thermoanaerobacter pseudethanolicus 39E.</title>
        <authorList>
            <person name="Copeland A."/>
            <person name="Lucas S."/>
            <person name="Lapidus A."/>
            <person name="Barry K."/>
            <person name="Glavina del Rio T."/>
            <person name="Dalin E."/>
            <person name="Tice H."/>
            <person name="Pitluck S."/>
            <person name="Bruce D."/>
            <person name="Goodwin L."/>
            <person name="Saunders E."/>
            <person name="Brettin T."/>
            <person name="Detter J.C."/>
            <person name="Han C."/>
            <person name="Schmutz J."/>
            <person name="Larimer F."/>
            <person name="Land M."/>
            <person name="Hauser L."/>
            <person name="Kyrpides N."/>
            <person name="Lykidis A."/>
            <person name="Hemme C."/>
            <person name="Fields M.W."/>
            <person name="He Z."/>
            <person name="Zhou J."/>
            <person name="Richardson P."/>
        </authorList>
    </citation>
    <scope>NUCLEOTIDE SEQUENCE [LARGE SCALE GENOMIC DNA]</scope>
    <source>
        <strain>ATCC 33223 / DSM 2355 / 39E</strain>
    </source>
</reference>
<sequence length="247" mass="27825">MLLEYIDEVYKSVEKIKATQIKNIQEAATLIANSLLKEEDSVFHVFGCGHSHMAAEELFYRAGGLACVNPILPSELMLHEGALKSSYYERNEDIIKLIFDRYDLRQEECIIIVSHSGRNGAPIEAAVEAKRRGLKVVAITSKEYKQKTFSRHSSGKFLEDIADIVIDNCGQYGDAALKIKKDTLEISFSPLSTVLNTVILNMIEAEIVFIMIKKNLVPPVFLSGNIEGAEEHNLKLIEKYKKRVKHL</sequence>
<proteinExistence type="inferred from homology"/>
<evidence type="ECO:0000255" key="1">
    <source>
        <dbReference type="HAMAP-Rule" id="MF_01240"/>
    </source>
</evidence>
<keyword id="KW-1185">Reference proteome</keyword>
<name>Y1980_THEP3</name>
<gene>
    <name type="ordered locus">Teth39_1980</name>
</gene>
<protein>
    <recommendedName>
        <fullName evidence="1">UPF0309 protein Teth39_1980</fullName>
    </recommendedName>
</protein>
<organism>
    <name type="scientific">Thermoanaerobacter pseudethanolicus (strain ATCC 33223 / 39E)</name>
    <name type="common">Clostridium thermohydrosulfuricum</name>
    <dbReference type="NCBI Taxonomy" id="340099"/>
    <lineage>
        <taxon>Bacteria</taxon>
        <taxon>Bacillati</taxon>
        <taxon>Bacillota</taxon>
        <taxon>Clostridia</taxon>
        <taxon>Thermoanaerobacterales</taxon>
        <taxon>Thermoanaerobacteraceae</taxon>
        <taxon>Thermoanaerobacter</taxon>
    </lineage>
</organism>
<dbReference type="EMBL" id="CP000924">
    <property type="protein sequence ID" value="ABY95606.1"/>
    <property type="molecule type" value="Genomic_DNA"/>
</dbReference>
<dbReference type="RefSeq" id="WP_012269700.1">
    <property type="nucleotide sequence ID" value="NC_010321.1"/>
</dbReference>
<dbReference type="SMR" id="B0KD87"/>
<dbReference type="STRING" id="340099.Teth39_1980"/>
<dbReference type="KEGG" id="tpd:Teth39_1980"/>
<dbReference type="eggNOG" id="COG4821">
    <property type="taxonomic scope" value="Bacteria"/>
</dbReference>
<dbReference type="HOGENOM" id="CLU_089975_0_0_9"/>
<dbReference type="Proteomes" id="UP000002156">
    <property type="component" value="Chromosome"/>
</dbReference>
<dbReference type="GO" id="GO:0097367">
    <property type="term" value="F:carbohydrate derivative binding"/>
    <property type="evidence" value="ECO:0007669"/>
    <property type="project" value="InterPro"/>
</dbReference>
<dbReference type="GO" id="GO:1901135">
    <property type="term" value="P:carbohydrate derivative metabolic process"/>
    <property type="evidence" value="ECO:0007669"/>
    <property type="project" value="InterPro"/>
</dbReference>
<dbReference type="CDD" id="cd05013">
    <property type="entry name" value="SIS_RpiR"/>
    <property type="match status" value="1"/>
</dbReference>
<dbReference type="Gene3D" id="3.40.50.10490">
    <property type="entry name" value="Glucose-6-phosphate isomerase like protein, domain 1"/>
    <property type="match status" value="1"/>
</dbReference>
<dbReference type="HAMAP" id="MF_01240">
    <property type="entry name" value="UPF0309"/>
    <property type="match status" value="1"/>
</dbReference>
<dbReference type="InterPro" id="IPR035472">
    <property type="entry name" value="RpiR-like_SIS"/>
</dbReference>
<dbReference type="InterPro" id="IPR001347">
    <property type="entry name" value="SIS_dom"/>
</dbReference>
<dbReference type="InterPro" id="IPR046348">
    <property type="entry name" value="SIS_dom_sf"/>
</dbReference>
<dbReference type="InterPro" id="IPR050099">
    <property type="entry name" value="SIS_GmhA/DiaA_subfam"/>
</dbReference>
<dbReference type="InterPro" id="IPR022951">
    <property type="entry name" value="UPF0309"/>
</dbReference>
<dbReference type="NCBIfam" id="NF002805">
    <property type="entry name" value="PRK02947.1"/>
    <property type="match status" value="1"/>
</dbReference>
<dbReference type="PANTHER" id="PTHR30390:SF7">
    <property type="entry name" value="PHOSPHOHEPTOSE ISOMERASE"/>
    <property type="match status" value="1"/>
</dbReference>
<dbReference type="PANTHER" id="PTHR30390">
    <property type="entry name" value="SEDOHEPTULOSE 7-PHOSPHATE ISOMERASE / DNAA INITIATOR-ASSOCIATING FACTOR FOR REPLICATION INITIATION"/>
    <property type="match status" value="1"/>
</dbReference>
<dbReference type="Pfam" id="PF13580">
    <property type="entry name" value="SIS_2"/>
    <property type="match status" value="1"/>
</dbReference>
<dbReference type="SUPFAM" id="SSF53697">
    <property type="entry name" value="SIS domain"/>
    <property type="match status" value="1"/>
</dbReference>
<dbReference type="PROSITE" id="PS51464">
    <property type="entry name" value="SIS"/>
    <property type="match status" value="1"/>
</dbReference>